<protein>
    <recommendedName>
        <fullName evidence="1">Envelope small membrane protein</fullName>
        <shortName evidence="1">E protein</shortName>
        <shortName evidence="1">sM protein</shortName>
    </recommendedName>
</protein>
<organismHost>
    <name type="scientific">Gallus gallus</name>
    <name type="common">Chicken</name>
    <dbReference type="NCBI Taxonomy" id="9031"/>
</organismHost>
<name>VEMP_IBVB</name>
<gene>
    <name evidence="1" type="primary">E</name>
    <name type="synonym">sM</name>
    <name type="ORF">3c</name>
</gene>
<organism>
    <name type="scientific">Avian infectious bronchitis virus (strain Beaudette)</name>
    <name type="common">IBV</name>
    <dbReference type="NCBI Taxonomy" id="11122"/>
    <lineage>
        <taxon>Viruses</taxon>
        <taxon>Riboviria</taxon>
        <taxon>Orthornavirae</taxon>
        <taxon>Pisuviricota</taxon>
        <taxon>Pisoniviricetes</taxon>
        <taxon>Nidovirales</taxon>
        <taxon>Cornidovirineae</taxon>
        <taxon>Coronaviridae</taxon>
        <taxon>Orthocoronavirinae</taxon>
        <taxon>Gammacoronavirus</taxon>
        <taxon>Igacovirus</taxon>
        <taxon>Avian coronavirus</taxon>
    </lineage>
</organism>
<dbReference type="EMBL" id="M95169">
    <property type="protein sequence ID" value="AAA70238.1"/>
    <property type="molecule type" value="Genomic_RNA"/>
</dbReference>
<dbReference type="EMBL" id="M27435">
    <property type="protein sequence ID" value="AAA46232.1"/>
    <property type="molecule type" value="mRNA"/>
</dbReference>
<dbReference type="EMBL" id="DQ001339">
    <property type="protein sequence ID" value="AAY24436.1"/>
    <property type="molecule type" value="Genomic_RNA"/>
</dbReference>
<dbReference type="SMR" id="Q89894"/>
<dbReference type="TCDB" id="1.A.99.1.1">
    <property type="family name" value="the infectious bronchitis virus envelope small membrane protein e (ibv-e) family"/>
</dbReference>
<dbReference type="KEGG" id="vg:1489742"/>
<dbReference type="Proteomes" id="UP000006717">
    <property type="component" value="Segment"/>
</dbReference>
<dbReference type="Proteomes" id="UP000180342">
    <property type="component" value="Genome"/>
</dbReference>
<dbReference type="GO" id="GO:0044178">
    <property type="term" value="C:host cell Golgi membrane"/>
    <property type="evidence" value="ECO:0007669"/>
    <property type="project" value="UniProtKB-SubCell"/>
</dbReference>
<dbReference type="GO" id="GO:0016020">
    <property type="term" value="C:membrane"/>
    <property type="evidence" value="ECO:0007669"/>
    <property type="project" value="UniProtKB-UniRule"/>
</dbReference>
<dbReference type="GO" id="GO:0140975">
    <property type="term" value="P:disruption of cellular anatomical structure in another organism"/>
    <property type="evidence" value="ECO:0007669"/>
    <property type="project" value="UniProtKB-UniRule"/>
</dbReference>
<dbReference type="GO" id="GO:0046760">
    <property type="term" value="P:viral budding from Golgi membrane"/>
    <property type="evidence" value="ECO:0000314"/>
    <property type="project" value="UniProtKB"/>
</dbReference>
<dbReference type="HAMAP" id="MF_04206">
    <property type="entry name" value="GAMMA_CORONA_E"/>
    <property type="match status" value="1"/>
</dbReference>
<dbReference type="InterPro" id="IPR003873">
    <property type="entry name" value="E_protein_CoV"/>
</dbReference>
<dbReference type="InterPro" id="IPR005296">
    <property type="entry name" value="IBV_3C"/>
</dbReference>
<dbReference type="Pfam" id="PF03620">
    <property type="entry name" value="IBV_3C"/>
    <property type="match status" value="1"/>
</dbReference>
<dbReference type="PROSITE" id="PS51926">
    <property type="entry name" value="COV_E"/>
    <property type="match status" value="1"/>
</dbReference>
<proteinExistence type="evidence at protein level"/>
<accession>Q89894</accession>
<accession>Q4ZJS8</accession>
<feature type="chain" id="PRO_0000283979" description="Envelope small membrane protein">
    <location>
        <begin position="1"/>
        <end position="108"/>
    </location>
</feature>
<feature type="topological domain" description="Virion surface" evidence="1">
    <location>
        <begin position="1"/>
        <end position="10"/>
    </location>
</feature>
<feature type="transmembrane region" description="Helical" evidence="1">
    <location>
        <begin position="11"/>
        <end position="31"/>
    </location>
</feature>
<feature type="topological domain" description="Intravirion" evidence="1">
    <location>
        <begin position="32"/>
        <end position="108"/>
    </location>
</feature>
<feature type="region of interest" description="Disordered" evidence="2">
    <location>
        <begin position="88"/>
        <end position="108"/>
    </location>
</feature>
<feature type="compositionally biased region" description="Polar residues" evidence="2">
    <location>
        <begin position="89"/>
        <end position="100"/>
    </location>
</feature>
<feature type="sequence variant" description="In strain: Isolate Vero cell-adapted p65.">
    <original>L</original>
    <variation>I</variation>
    <location>
        <position position="72"/>
    </location>
</feature>
<feature type="sequence variant" description="In strain: Isolate Vero cell-adapted p65.">
    <original>A</original>
    <variation>V</variation>
    <location>
        <position position="101"/>
    </location>
</feature>
<evidence type="ECO:0000255" key="1">
    <source>
        <dbReference type="HAMAP-Rule" id="MF_04206"/>
    </source>
</evidence>
<evidence type="ECO:0000256" key="2">
    <source>
        <dbReference type="SAM" id="MobiDB-lite"/>
    </source>
</evidence>
<evidence type="ECO:0000269" key="3">
    <source>
    </source>
</evidence>
<evidence type="ECO:0000269" key="4">
    <source>
    </source>
</evidence>
<sequence>MNLLNKSLEENGSFLTALYIIVGFLALYLLGRALQAFVQAADACCLFWYTWVVIPGAKGTAFVYKYTYGRKLNNPELEAVIVNEFPKNGWNNKNPANFQDAQRDKLYS</sequence>
<comment type="function">
    <text evidence="1">Plays a central role in virus morphogenesis and assembly. Acts as a viroporin and self-assembles in host membranes forming pentameric protein-lipid pores that allow ion transport. Also plays a role in the induction of apoptosis.</text>
</comment>
<comment type="subunit">
    <text evidence="1 3 4">Homooligomer. Interacts with the M membrane protein in the budding compartment of the host cell, which is located between endoplasmic reticulum and the Golgi complex. The cytoplasmic tails of both proteins are important for this function. Interacts with Nucleoprotein.</text>
</comment>
<comment type="subcellular location">
    <subcellularLocation>
        <location evidence="1">Host Golgi apparatus membrane</location>
        <topology evidence="1">Single-pass type III membrane protein</topology>
    </subcellularLocation>
    <text evidence="1">The cytoplasmic tail functions as a Golgi complex-targeting signal.</text>
</comment>
<comment type="similarity">
    <text evidence="1">Belongs to the gammacoronaviruses E protein family.</text>
</comment>
<keyword id="KW-0053">Apoptosis</keyword>
<keyword id="KW-1040">Host Golgi apparatus</keyword>
<keyword id="KW-1043">Host membrane</keyword>
<keyword id="KW-0472">Membrane</keyword>
<keyword id="KW-1185">Reference proteome</keyword>
<keyword id="KW-0812">Transmembrane</keyword>
<keyword id="KW-1133">Transmembrane helix</keyword>
<reference key="1">
    <citation type="journal article" date="1985" name="J. Gen. Virol.">
        <title>Sequencing of coronavirus IBV genomic RNA: three open reading frames in the 5' 'unique' region of mRNA D.</title>
        <authorList>
            <person name="Boursnell M.E.G."/>
            <person name="Binns M.M."/>
            <person name="Brown T.D.K."/>
        </authorList>
    </citation>
    <scope>NUCLEOTIDE SEQUENCE [GENOMIC RNA]</scope>
</reference>
<reference key="2">
    <citation type="journal article" date="1987" name="J. Gen. Virol.">
        <title>Completion of the sequence of the genome of the coronavirus avian infectious bronchitis virus.</title>
        <authorList>
            <person name="Boursnell M.E.G."/>
            <person name="Brown T.D.K."/>
            <person name="Foulds I.J."/>
            <person name="Green P.F."/>
            <person name="Tomley F.M."/>
            <person name="Binns M.M."/>
        </authorList>
    </citation>
    <scope>NUCLEOTIDE SEQUENCE [GENOMIC RNA]</scope>
</reference>
<reference key="3">
    <citation type="journal article" date="1987" name="Adv. Exp. Med. Biol.">
        <title>Identification of a new gene product encoded by mRNA D of infectious bronchitis virus.</title>
        <authorList>
            <person name="Smith A.R."/>
            <person name="Boursnell M.E.G."/>
            <person name="Binns M.M."/>
            <person name="Brown T.D.K."/>
            <person name="Inglis S.C."/>
        </authorList>
    </citation>
    <scope>NUCLEOTIDE SEQUENCE [MRNA]</scope>
</reference>
<reference key="4">
    <citation type="journal article" date="2005" name="Biochem. Biophys. Res. Commun.">
        <title>Selection of and recombination between minor variants lead to the adaptation of an avian coronavirus to primate cells.</title>
        <authorList>
            <person name="Fang S.G."/>
            <person name="Shen S."/>
            <person name="Tay F.P."/>
            <person name="Liu D.X."/>
        </authorList>
    </citation>
    <scope>NUCLEOTIDE SEQUENCE [GENOMIC RNA]</scope>
    <source>
        <strain>Isolate Vero cell-adapted p65</strain>
    </source>
</reference>
<reference key="5">
    <citation type="journal article" date="2001" name="Adv. Exp. Med. Biol.">
        <title>Physical interaction between the membrane (M) and envelope (E) proteins of the coronavirus avian infectious bronchitis virus (IBV).</title>
        <authorList>
            <person name="Lim K.P."/>
            <person name="Xu H.Y."/>
            <person name="Liu D.X."/>
        </authorList>
    </citation>
    <scope>INTERACTION WITH M PROTEIN</scope>
</reference>
<reference key="6">
    <citation type="journal article" date="2000" name="J. Virol.">
        <title>Infectious bronchitis virus E protein is targeted to the Golgi complex and directs release of virus-like particles.</title>
        <authorList>
            <person name="Corse E."/>
            <person name="Machamer C.E."/>
        </authorList>
    </citation>
    <scope>TOPOLOGY</scope>
    <scope>SUBCELLULAR LOCATION</scope>
</reference>
<reference key="7">
    <citation type="journal article" date="2003" name="Virology">
        <title>The cytoplasmic tails of infectious bronchitis virus E and M proteins mediate their interaction.</title>
        <authorList>
            <person name="Corse E."/>
            <person name="Machamer C.E."/>
        </authorList>
    </citation>
    <scope>INTERACTION WITH M PROTEIN</scope>
</reference>